<reference key="1">
    <citation type="journal article" date="2010" name="J. Bacteriol.">
        <title>Genome sequence of the deep-rooted Yersinia pestis strain Angola reveals new insights into the evolution and pangenome of the plague bacterium.</title>
        <authorList>
            <person name="Eppinger M."/>
            <person name="Worsham P.L."/>
            <person name="Nikolich M.P."/>
            <person name="Riley D.R."/>
            <person name="Sebastian Y."/>
            <person name="Mou S."/>
            <person name="Achtman M."/>
            <person name="Lindler L.E."/>
            <person name="Ravel J."/>
        </authorList>
    </citation>
    <scope>NUCLEOTIDE SEQUENCE [LARGE SCALE GENOMIC DNA]</scope>
    <source>
        <strain>Angola</strain>
    </source>
</reference>
<feature type="chain" id="PRO_1000145386" description="Peptide methionine sulfoxide reductase MsrB">
    <location>
        <begin position="1"/>
        <end position="137"/>
    </location>
</feature>
<feature type="domain" description="MsrB" evidence="2">
    <location>
        <begin position="7"/>
        <end position="129"/>
    </location>
</feature>
<feature type="active site" description="Nucleophile" evidence="2">
    <location>
        <position position="118"/>
    </location>
</feature>
<feature type="binding site" evidence="2">
    <location>
        <position position="46"/>
    </location>
    <ligand>
        <name>Zn(2+)</name>
        <dbReference type="ChEBI" id="CHEBI:29105"/>
    </ligand>
</feature>
<feature type="binding site" evidence="2">
    <location>
        <position position="49"/>
    </location>
    <ligand>
        <name>Zn(2+)</name>
        <dbReference type="ChEBI" id="CHEBI:29105"/>
    </ligand>
</feature>
<feature type="binding site" evidence="2">
    <location>
        <position position="95"/>
    </location>
    <ligand>
        <name>Zn(2+)</name>
        <dbReference type="ChEBI" id="CHEBI:29105"/>
    </ligand>
</feature>
<feature type="binding site" evidence="2">
    <location>
        <position position="98"/>
    </location>
    <ligand>
        <name>Zn(2+)</name>
        <dbReference type="ChEBI" id="CHEBI:29105"/>
    </ligand>
</feature>
<proteinExistence type="inferred from homology"/>
<organism>
    <name type="scientific">Yersinia pestis bv. Antiqua (strain Angola)</name>
    <dbReference type="NCBI Taxonomy" id="349746"/>
    <lineage>
        <taxon>Bacteria</taxon>
        <taxon>Pseudomonadati</taxon>
        <taxon>Pseudomonadota</taxon>
        <taxon>Gammaproteobacteria</taxon>
        <taxon>Enterobacterales</taxon>
        <taxon>Yersiniaceae</taxon>
        <taxon>Yersinia</taxon>
    </lineage>
</organism>
<evidence type="ECO:0000255" key="1">
    <source>
        <dbReference type="HAMAP-Rule" id="MF_01400"/>
    </source>
</evidence>
<evidence type="ECO:0000255" key="2">
    <source>
        <dbReference type="PROSITE-ProRule" id="PRU01126"/>
    </source>
</evidence>
<comment type="catalytic activity">
    <reaction evidence="1">
        <text>L-methionyl-[protein] + [thioredoxin]-disulfide + H2O = L-methionyl-(R)-S-oxide-[protein] + [thioredoxin]-dithiol</text>
        <dbReference type="Rhea" id="RHEA:24164"/>
        <dbReference type="Rhea" id="RHEA-COMP:10698"/>
        <dbReference type="Rhea" id="RHEA-COMP:10700"/>
        <dbReference type="Rhea" id="RHEA-COMP:12313"/>
        <dbReference type="Rhea" id="RHEA-COMP:12314"/>
        <dbReference type="ChEBI" id="CHEBI:15377"/>
        <dbReference type="ChEBI" id="CHEBI:16044"/>
        <dbReference type="ChEBI" id="CHEBI:29950"/>
        <dbReference type="ChEBI" id="CHEBI:45764"/>
        <dbReference type="ChEBI" id="CHEBI:50058"/>
        <dbReference type="EC" id="1.8.4.12"/>
    </reaction>
</comment>
<comment type="cofactor">
    <cofactor evidence="1">
        <name>Zn(2+)</name>
        <dbReference type="ChEBI" id="CHEBI:29105"/>
    </cofactor>
    <text evidence="1">Binds 1 zinc ion per subunit. The zinc ion is important for the structural integrity of the protein.</text>
</comment>
<comment type="similarity">
    <text evidence="1">Belongs to the MsrB Met sulfoxide reductase family.</text>
</comment>
<name>MSRB_YERPG</name>
<accession>A9R9C4</accession>
<sequence length="137" mass="15515">MAKELNPTENIEKLSDIQRYVTQERGTEAPFTGKLLHNKRDGVYQCLCCHQPLFISESKFDSGCGWPSFYQPIDADSIRYIDDYSHNMHRIEIRCGNCDAHLGHVFPDGPQPTGERYCINSASLNFVDDQNGEQTAG</sequence>
<keyword id="KW-0479">Metal-binding</keyword>
<keyword id="KW-0560">Oxidoreductase</keyword>
<keyword id="KW-0862">Zinc</keyword>
<protein>
    <recommendedName>
        <fullName evidence="1">Peptide methionine sulfoxide reductase MsrB</fullName>
        <ecNumber evidence="1">1.8.4.12</ecNumber>
    </recommendedName>
    <alternativeName>
        <fullName evidence="1">Peptide-methionine (R)-S-oxide reductase</fullName>
    </alternativeName>
</protein>
<dbReference type="EC" id="1.8.4.12" evidence="1"/>
<dbReference type="EMBL" id="CP000901">
    <property type="protein sequence ID" value="ABX85464.1"/>
    <property type="molecule type" value="Genomic_DNA"/>
</dbReference>
<dbReference type="RefSeq" id="WP_002211677.1">
    <property type="nucleotide sequence ID" value="NZ_CP009935.1"/>
</dbReference>
<dbReference type="SMR" id="A9R9C4"/>
<dbReference type="GeneID" id="57976510"/>
<dbReference type="KEGG" id="ypg:YpAngola_A2350"/>
<dbReference type="PATRIC" id="fig|349746.12.peg.3361"/>
<dbReference type="GO" id="GO:0005737">
    <property type="term" value="C:cytoplasm"/>
    <property type="evidence" value="ECO:0007669"/>
    <property type="project" value="TreeGrafter"/>
</dbReference>
<dbReference type="GO" id="GO:0033743">
    <property type="term" value="F:peptide-methionine (R)-S-oxide reductase activity"/>
    <property type="evidence" value="ECO:0007669"/>
    <property type="project" value="UniProtKB-UniRule"/>
</dbReference>
<dbReference type="GO" id="GO:0008270">
    <property type="term" value="F:zinc ion binding"/>
    <property type="evidence" value="ECO:0007669"/>
    <property type="project" value="UniProtKB-UniRule"/>
</dbReference>
<dbReference type="GO" id="GO:0030091">
    <property type="term" value="P:protein repair"/>
    <property type="evidence" value="ECO:0007669"/>
    <property type="project" value="InterPro"/>
</dbReference>
<dbReference type="GO" id="GO:0006979">
    <property type="term" value="P:response to oxidative stress"/>
    <property type="evidence" value="ECO:0007669"/>
    <property type="project" value="InterPro"/>
</dbReference>
<dbReference type="FunFam" id="2.170.150.20:FF:000001">
    <property type="entry name" value="Peptide methionine sulfoxide reductase MsrB"/>
    <property type="match status" value="1"/>
</dbReference>
<dbReference type="Gene3D" id="2.170.150.20">
    <property type="entry name" value="Peptide methionine sulfoxide reductase"/>
    <property type="match status" value="1"/>
</dbReference>
<dbReference type="HAMAP" id="MF_01400">
    <property type="entry name" value="MsrB"/>
    <property type="match status" value="1"/>
</dbReference>
<dbReference type="InterPro" id="IPR028427">
    <property type="entry name" value="Met_Sox_Rdtase_MsrB"/>
</dbReference>
<dbReference type="InterPro" id="IPR002579">
    <property type="entry name" value="Met_Sox_Rdtase_MsrB_dom"/>
</dbReference>
<dbReference type="InterPro" id="IPR011057">
    <property type="entry name" value="Mss4-like_sf"/>
</dbReference>
<dbReference type="NCBIfam" id="TIGR00357">
    <property type="entry name" value="peptide-methionine (R)-S-oxide reductase MsrB"/>
    <property type="match status" value="1"/>
</dbReference>
<dbReference type="PANTHER" id="PTHR10173">
    <property type="entry name" value="METHIONINE SULFOXIDE REDUCTASE"/>
    <property type="match status" value="1"/>
</dbReference>
<dbReference type="PANTHER" id="PTHR10173:SF52">
    <property type="entry name" value="METHIONINE-R-SULFOXIDE REDUCTASE B1"/>
    <property type="match status" value="1"/>
</dbReference>
<dbReference type="Pfam" id="PF01641">
    <property type="entry name" value="SelR"/>
    <property type="match status" value="1"/>
</dbReference>
<dbReference type="SUPFAM" id="SSF51316">
    <property type="entry name" value="Mss4-like"/>
    <property type="match status" value="1"/>
</dbReference>
<dbReference type="PROSITE" id="PS51790">
    <property type="entry name" value="MSRB"/>
    <property type="match status" value="1"/>
</dbReference>
<gene>
    <name evidence="1" type="primary">msrB</name>
    <name type="ordered locus">YpAngola_A2350</name>
</gene>